<gene>
    <name evidence="1" type="primary">mnmG</name>
    <name evidence="1" type="synonym">gidA</name>
    <name type="ordered locus">LBL_0001</name>
</gene>
<organism>
    <name type="scientific">Leptospira borgpetersenii serovar Hardjo-bovis (strain L550)</name>
    <dbReference type="NCBI Taxonomy" id="355276"/>
    <lineage>
        <taxon>Bacteria</taxon>
        <taxon>Pseudomonadati</taxon>
        <taxon>Spirochaetota</taxon>
        <taxon>Spirochaetia</taxon>
        <taxon>Leptospirales</taxon>
        <taxon>Leptospiraceae</taxon>
        <taxon>Leptospira</taxon>
    </lineage>
</organism>
<sequence>MIESKNQSFFPNRFDCVVVGAGHAGSEAAYIASKGGAKTLLITMNLDTIGQMSCNPAIGGIAKGHMVREVDALGGIMGKVIDNTGIQFKMLNTSKGPSVWAPRAQAEKKEYQLKVKHTLEAEKNLSMRQDTVEELLIENDQVIGVKTGRGFEIYTNHVILTTGTFLSSLVHIGTYQNENGRMCEPTVKGLSKSLAKYNLKLGRLKTGTPPRIHKNSVDLSVLAIQDGDANPSPFSFSTEKITRRQIPCYITYTNVETHKLIHENLSLSPMYSGQIQSTGPRYCPSIEDKVVRFADRERHQVFLEPEGYETTEIYLNGVSTSLPEEVQWKLVRSLKGLENAEIVRPGYAIEYDYVDPTELKPTLETKKIKGLYHAGQINGTTGYEEAAAQGLVAAYSVLHSLKNLDPLLFKRSESYIGVLIDDLVYKGVEDPYRMFTSRAEHRLLLRQDNADQRLMKYGYELGLVDQESYDRMKDKYERVNSVREKIYQIPLKPSDEFQNLLDQKGITNYKFGMKLDSFLKRPEIKIEDVEFMLPEVSSWSESEKNILEMEIKYEGYIKRELETIQWKNKYLDLAIPEDINYESIAGLKKEAIQKLKTHKPMTLEKAGQISGVDPSDVDLLLYHIKGKRKQEAEAS</sequence>
<comment type="function">
    <text evidence="1">NAD-binding protein involved in the addition of a carboxymethylaminomethyl (cmnm) group at the wobble position (U34) of certain tRNAs, forming tRNA-cmnm(5)s(2)U34.</text>
</comment>
<comment type="cofactor">
    <cofactor evidence="1">
        <name>FAD</name>
        <dbReference type="ChEBI" id="CHEBI:57692"/>
    </cofactor>
</comment>
<comment type="subunit">
    <text evidence="1">Homodimer. Heterotetramer of two MnmE and two MnmG subunits.</text>
</comment>
<comment type="subcellular location">
    <subcellularLocation>
        <location evidence="1">Cytoplasm</location>
    </subcellularLocation>
</comment>
<comment type="similarity">
    <text evidence="1">Belongs to the MnmG family.</text>
</comment>
<proteinExistence type="inferred from homology"/>
<name>MNMG_LEPBL</name>
<keyword id="KW-0963">Cytoplasm</keyword>
<keyword id="KW-0274">FAD</keyword>
<keyword id="KW-0285">Flavoprotein</keyword>
<keyword id="KW-0520">NAD</keyword>
<keyword id="KW-0819">tRNA processing</keyword>
<protein>
    <recommendedName>
        <fullName evidence="1">tRNA uridine 5-carboxymethylaminomethyl modification enzyme MnmG</fullName>
    </recommendedName>
    <alternativeName>
        <fullName evidence="1">Glucose-inhibited division protein A</fullName>
    </alternativeName>
</protein>
<evidence type="ECO:0000255" key="1">
    <source>
        <dbReference type="HAMAP-Rule" id="MF_00129"/>
    </source>
</evidence>
<reference key="1">
    <citation type="journal article" date="2006" name="Proc. Natl. Acad. Sci. U.S.A.">
        <title>Genome reduction in Leptospira borgpetersenii reflects limited transmission potential.</title>
        <authorList>
            <person name="Bulach D.M."/>
            <person name="Zuerner R.L."/>
            <person name="Wilson P."/>
            <person name="Seemann T."/>
            <person name="McGrath A."/>
            <person name="Cullen P.A."/>
            <person name="Davis J."/>
            <person name="Johnson M."/>
            <person name="Kuczek E."/>
            <person name="Alt D.P."/>
            <person name="Peterson-Burch B."/>
            <person name="Coppel R.L."/>
            <person name="Rood J.I."/>
            <person name="Davies J.K."/>
            <person name="Adler B."/>
        </authorList>
    </citation>
    <scope>NUCLEOTIDE SEQUENCE [LARGE SCALE GENOMIC DNA]</scope>
    <source>
        <strain>L550</strain>
    </source>
</reference>
<feature type="chain" id="PRO_0000345291" description="tRNA uridine 5-carboxymethylaminomethyl modification enzyme MnmG">
    <location>
        <begin position="1"/>
        <end position="635"/>
    </location>
</feature>
<feature type="binding site" evidence="1">
    <location>
        <begin position="20"/>
        <end position="25"/>
    </location>
    <ligand>
        <name>FAD</name>
        <dbReference type="ChEBI" id="CHEBI:57692"/>
    </ligand>
</feature>
<feature type="binding site" evidence="1">
    <location>
        <begin position="279"/>
        <end position="293"/>
    </location>
    <ligand>
        <name>NAD(+)</name>
        <dbReference type="ChEBI" id="CHEBI:57540"/>
    </ligand>
</feature>
<dbReference type="EMBL" id="CP000348">
    <property type="protein sequence ID" value="ABJ77640.1"/>
    <property type="molecule type" value="Genomic_DNA"/>
</dbReference>
<dbReference type="RefSeq" id="WP_011669135.1">
    <property type="nucleotide sequence ID" value="NC_008508.1"/>
</dbReference>
<dbReference type="SMR" id="Q056V5"/>
<dbReference type="KEGG" id="lbl:LBL_0001"/>
<dbReference type="HOGENOM" id="CLU_007831_2_2_12"/>
<dbReference type="GO" id="GO:0005829">
    <property type="term" value="C:cytosol"/>
    <property type="evidence" value="ECO:0007669"/>
    <property type="project" value="TreeGrafter"/>
</dbReference>
<dbReference type="GO" id="GO:0050660">
    <property type="term" value="F:flavin adenine dinucleotide binding"/>
    <property type="evidence" value="ECO:0007669"/>
    <property type="project" value="UniProtKB-UniRule"/>
</dbReference>
<dbReference type="GO" id="GO:0030488">
    <property type="term" value="P:tRNA methylation"/>
    <property type="evidence" value="ECO:0007669"/>
    <property type="project" value="TreeGrafter"/>
</dbReference>
<dbReference type="GO" id="GO:0002098">
    <property type="term" value="P:tRNA wobble uridine modification"/>
    <property type="evidence" value="ECO:0007669"/>
    <property type="project" value="InterPro"/>
</dbReference>
<dbReference type="FunFam" id="1.10.150.570:FF:000001">
    <property type="entry name" value="tRNA uridine 5-carboxymethylaminomethyl modification enzyme MnmG"/>
    <property type="match status" value="1"/>
</dbReference>
<dbReference type="FunFam" id="3.50.50.60:FF:000002">
    <property type="entry name" value="tRNA uridine 5-carboxymethylaminomethyl modification enzyme MnmG"/>
    <property type="match status" value="1"/>
</dbReference>
<dbReference type="FunFam" id="3.50.50.60:FF:000010">
    <property type="entry name" value="tRNA uridine 5-carboxymethylaminomethyl modification enzyme MnmG"/>
    <property type="match status" value="1"/>
</dbReference>
<dbReference type="Gene3D" id="3.50.50.60">
    <property type="entry name" value="FAD/NAD(P)-binding domain"/>
    <property type="match status" value="2"/>
</dbReference>
<dbReference type="Gene3D" id="1.10.150.570">
    <property type="entry name" value="GidA associated domain, C-terminal subdomain"/>
    <property type="match status" value="1"/>
</dbReference>
<dbReference type="Gene3D" id="1.10.10.1800">
    <property type="entry name" value="tRNA uridine 5-carboxymethylaminomethyl modification enzyme MnmG/GidA"/>
    <property type="match status" value="1"/>
</dbReference>
<dbReference type="HAMAP" id="MF_00129">
    <property type="entry name" value="MnmG_GidA"/>
    <property type="match status" value="1"/>
</dbReference>
<dbReference type="InterPro" id="IPR036188">
    <property type="entry name" value="FAD/NAD-bd_sf"/>
</dbReference>
<dbReference type="InterPro" id="IPR049312">
    <property type="entry name" value="GIDA_C_N"/>
</dbReference>
<dbReference type="InterPro" id="IPR004416">
    <property type="entry name" value="MnmG"/>
</dbReference>
<dbReference type="InterPro" id="IPR002218">
    <property type="entry name" value="MnmG-rel"/>
</dbReference>
<dbReference type="InterPro" id="IPR020595">
    <property type="entry name" value="MnmG-rel_CS"/>
</dbReference>
<dbReference type="InterPro" id="IPR026904">
    <property type="entry name" value="MnmG_C"/>
</dbReference>
<dbReference type="InterPro" id="IPR047001">
    <property type="entry name" value="MnmG_C_subdom"/>
</dbReference>
<dbReference type="InterPro" id="IPR044920">
    <property type="entry name" value="MnmG_C_subdom_sf"/>
</dbReference>
<dbReference type="InterPro" id="IPR040131">
    <property type="entry name" value="MnmG_N"/>
</dbReference>
<dbReference type="NCBIfam" id="TIGR00136">
    <property type="entry name" value="mnmG_gidA"/>
    <property type="match status" value="1"/>
</dbReference>
<dbReference type="PANTHER" id="PTHR11806">
    <property type="entry name" value="GLUCOSE INHIBITED DIVISION PROTEIN A"/>
    <property type="match status" value="1"/>
</dbReference>
<dbReference type="PANTHER" id="PTHR11806:SF0">
    <property type="entry name" value="PROTEIN MTO1 HOMOLOG, MITOCHONDRIAL"/>
    <property type="match status" value="1"/>
</dbReference>
<dbReference type="Pfam" id="PF01134">
    <property type="entry name" value="GIDA"/>
    <property type="match status" value="1"/>
</dbReference>
<dbReference type="Pfam" id="PF21680">
    <property type="entry name" value="GIDA_C_1st"/>
    <property type="match status" value="1"/>
</dbReference>
<dbReference type="Pfam" id="PF13932">
    <property type="entry name" value="SAM_GIDA_C"/>
    <property type="match status" value="1"/>
</dbReference>
<dbReference type="SMART" id="SM01228">
    <property type="entry name" value="GIDA_assoc_3"/>
    <property type="match status" value="1"/>
</dbReference>
<dbReference type="SUPFAM" id="SSF51905">
    <property type="entry name" value="FAD/NAD(P)-binding domain"/>
    <property type="match status" value="1"/>
</dbReference>
<dbReference type="PROSITE" id="PS01280">
    <property type="entry name" value="GIDA_1"/>
    <property type="match status" value="1"/>
</dbReference>
<accession>Q056V5</accession>